<keyword id="KW-0012">Acyltransferase</keyword>
<keyword id="KW-0963">Cytoplasm</keyword>
<keyword id="KW-0441">Lipid A biosynthesis</keyword>
<keyword id="KW-0444">Lipid biosynthesis</keyword>
<keyword id="KW-0443">Lipid metabolism</keyword>
<keyword id="KW-0677">Repeat</keyword>
<keyword id="KW-0808">Transferase</keyword>
<gene>
    <name evidence="1" type="primary">lpxA</name>
    <name type="ordered locus">jhp_1289</name>
</gene>
<comment type="function">
    <text evidence="1">Involved in the biosynthesis of lipid A, a phosphorylated glycolipid that anchors the lipopolysaccharide to the outer membrane of the cell.</text>
</comment>
<comment type="catalytic activity">
    <reaction evidence="1">
        <text>a (3R)-hydroxyacyl-[ACP] + UDP-N-acetyl-alpha-D-glucosamine = a UDP-3-O-[(3R)-3-hydroxyacyl]-N-acetyl-alpha-D-glucosamine + holo-[ACP]</text>
        <dbReference type="Rhea" id="RHEA:67812"/>
        <dbReference type="Rhea" id="RHEA-COMP:9685"/>
        <dbReference type="Rhea" id="RHEA-COMP:9945"/>
        <dbReference type="ChEBI" id="CHEBI:57705"/>
        <dbReference type="ChEBI" id="CHEBI:64479"/>
        <dbReference type="ChEBI" id="CHEBI:78827"/>
        <dbReference type="ChEBI" id="CHEBI:173225"/>
        <dbReference type="EC" id="2.3.1.129"/>
    </reaction>
</comment>
<comment type="pathway">
    <text evidence="1">Glycolipid biosynthesis; lipid IV(A) biosynthesis; lipid IV(A) from (3R)-3-hydroxytetradecanoyl-[acyl-carrier-protein] and UDP-N-acetyl-alpha-D-glucosamine: step 1/6.</text>
</comment>
<comment type="subunit">
    <text evidence="1">Homotrimer.</text>
</comment>
<comment type="subcellular location">
    <subcellularLocation>
        <location evidence="1">Cytoplasm</location>
    </subcellularLocation>
</comment>
<comment type="similarity">
    <text evidence="1">Belongs to the transferase hexapeptide repeat family. LpxA subfamily.</text>
</comment>
<proteinExistence type="inferred from homology"/>
<feature type="chain" id="PRO_0000188053" description="Acyl-[acyl-carrier-protein]--UDP-N-acetylglucosamine O-acyltransferase">
    <location>
        <begin position="1"/>
        <end position="270"/>
    </location>
</feature>
<dbReference type="EC" id="2.3.1.129" evidence="1"/>
<dbReference type="EMBL" id="AE001439">
    <property type="protein sequence ID" value="AAD06863.1"/>
    <property type="molecule type" value="Genomic_DNA"/>
</dbReference>
<dbReference type="PIR" id="G71826">
    <property type="entry name" value="G71826"/>
</dbReference>
<dbReference type="RefSeq" id="WP_000034070.1">
    <property type="nucleotide sequence ID" value="NC_000921.1"/>
</dbReference>
<dbReference type="SMR" id="Q9ZJL7"/>
<dbReference type="KEGG" id="hpj:jhp_1289"/>
<dbReference type="PATRIC" id="fig|85963.30.peg.1279"/>
<dbReference type="eggNOG" id="COG1043">
    <property type="taxonomic scope" value="Bacteria"/>
</dbReference>
<dbReference type="UniPathway" id="UPA00359">
    <property type="reaction ID" value="UER00477"/>
</dbReference>
<dbReference type="Proteomes" id="UP000000804">
    <property type="component" value="Chromosome"/>
</dbReference>
<dbReference type="GO" id="GO:0005737">
    <property type="term" value="C:cytoplasm"/>
    <property type="evidence" value="ECO:0007669"/>
    <property type="project" value="UniProtKB-SubCell"/>
</dbReference>
<dbReference type="GO" id="GO:0016020">
    <property type="term" value="C:membrane"/>
    <property type="evidence" value="ECO:0007669"/>
    <property type="project" value="GOC"/>
</dbReference>
<dbReference type="GO" id="GO:0008780">
    <property type="term" value="F:acyl-[acyl-carrier-protein]-UDP-N-acetylglucosamine O-acyltransferase activity"/>
    <property type="evidence" value="ECO:0007669"/>
    <property type="project" value="UniProtKB-UniRule"/>
</dbReference>
<dbReference type="GO" id="GO:0009245">
    <property type="term" value="P:lipid A biosynthetic process"/>
    <property type="evidence" value="ECO:0007669"/>
    <property type="project" value="UniProtKB-UniRule"/>
</dbReference>
<dbReference type="CDD" id="cd03351">
    <property type="entry name" value="LbH_UDP-GlcNAc_AT"/>
    <property type="match status" value="1"/>
</dbReference>
<dbReference type="Gene3D" id="2.160.10.10">
    <property type="entry name" value="Hexapeptide repeat proteins"/>
    <property type="match status" value="1"/>
</dbReference>
<dbReference type="Gene3D" id="1.20.1180.10">
    <property type="entry name" value="Udp N-acetylglucosamine O-acyltransferase, C-terminal domain"/>
    <property type="match status" value="1"/>
</dbReference>
<dbReference type="HAMAP" id="MF_00387">
    <property type="entry name" value="LpxA"/>
    <property type="match status" value="1"/>
</dbReference>
<dbReference type="InterPro" id="IPR029098">
    <property type="entry name" value="Acetyltransf_C"/>
</dbReference>
<dbReference type="InterPro" id="IPR037157">
    <property type="entry name" value="Acetyltransf_C_sf"/>
</dbReference>
<dbReference type="InterPro" id="IPR001451">
    <property type="entry name" value="Hexapep"/>
</dbReference>
<dbReference type="InterPro" id="IPR018357">
    <property type="entry name" value="Hexapep_transf_CS"/>
</dbReference>
<dbReference type="InterPro" id="IPR010137">
    <property type="entry name" value="Lipid_A_LpxA"/>
</dbReference>
<dbReference type="InterPro" id="IPR011004">
    <property type="entry name" value="Trimer_LpxA-like_sf"/>
</dbReference>
<dbReference type="NCBIfam" id="TIGR01852">
    <property type="entry name" value="lipid_A_lpxA"/>
    <property type="match status" value="1"/>
</dbReference>
<dbReference type="NCBIfam" id="NF003657">
    <property type="entry name" value="PRK05289.1"/>
    <property type="match status" value="1"/>
</dbReference>
<dbReference type="PANTHER" id="PTHR43480">
    <property type="entry name" value="ACYL-[ACYL-CARRIER-PROTEIN]--UDP-N-ACETYLGLUCOSAMINE O-ACYLTRANSFERASE"/>
    <property type="match status" value="1"/>
</dbReference>
<dbReference type="PANTHER" id="PTHR43480:SF1">
    <property type="entry name" value="ACYL-[ACYL-CARRIER-PROTEIN]--UDP-N-ACETYLGLUCOSAMINE O-ACYLTRANSFERASE, MITOCHONDRIAL-RELATED"/>
    <property type="match status" value="1"/>
</dbReference>
<dbReference type="Pfam" id="PF13720">
    <property type="entry name" value="Acetyltransf_11"/>
    <property type="match status" value="1"/>
</dbReference>
<dbReference type="Pfam" id="PF00132">
    <property type="entry name" value="Hexapep"/>
    <property type="match status" value="2"/>
</dbReference>
<dbReference type="PIRSF" id="PIRSF000456">
    <property type="entry name" value="UDP-GlcNAc_acltr"/>
    <property type="match status" value="1"/>
</dbReference>
<dbReference type="SUPFAM" id="SSF51161">
    <property type="entry name" value="Trimeric LpxA-like enzymes"/>
    <property type="match status" value="1"/>
</dbReference>
<dbReference type="PROSITE" id="PS00101">
    <property type="entry name" value="HEXAPEP_TRANSFERASES"/>
    <property type="match status" value="2"/>
</dbReference>
<evidence type="ECO:0000255" key="1">
    <source>
        <dbReference type="HAMAP-Rule" id="MF_00387"/>
    </source>
</evidence>
<protein>
    <recommendedName>
        <fullName evidence="1">Acyl-[acyl-carrier-protein]--UDP-N-acetylglucosamine O-acyltransferase</fullName>
        <shortName evidence="1">UDP-N-acetylglucosamine acyltransferase</shortName>
        <ecNumber evidence="1">2.3.1.129</ecNumber>
    </recommendedName>
</protein>
<reference key="1">
    <citation type="journal article" date="1999" name="Nature">
        <title>Genomic sequence comparison of two unrelated isolates of the human gastric pathogen Helicobacter pylori.</title>
        <authorList>
            <person name="Alm R.A."/>
            <person name="Ling L.-S.L."/>
            <person name="Moir D.T."/>
            <person name="King B.L."/>
            <person name="Brown E.D."/>
            <person name="Doig P.C."/>
            <person name="Smith D.R."/>
            <person name="Noonan B."/>
            <person name="Guild B.C."/>
            <person name="deJonge B.L."/>
            <person name="Carmel G."/>
            <person name="Tummino P.J."/>
            <person name="Caruso A."/>
            <person name="Uria-Nickelsen M."/>
            <person name="Mills D.M."/>
            <person name="Ives C."/>
            <person name="Gibson R."/>
            <person name="Merberg D."/>
            <person name="Mills S.D."/>
            <person name="Jiang Q."/>
            <person name="Taylor D.E."/>
            <person name="Vovis G.F."/>
            <person name="Trust T.J."/>
        </authorList>
    </citation>
    <scope>NUCLEOTIDE SEQUENCE [LARGE SCALE GENOMIC DNA]</scope>
    <source>
        <strain>J99 / ATCC 700824</strain>
    </source>
</reference>
<organism>
    <name type="scientific">Helicobacter pylori (strain J99 / ATCC 700824)</name>
    <name type="common">Campylobacter pylori J99</name>
    <dbReference type="NCBI Taxonomy" id="85963"/>
    <lineage>
        <taxon>Bacteria</taxon>
        <taxon>Pseudomonadati</taxon>
        <taxon>Campylobacterota</taxon>
        <taxon>Epsilonproteobacteria</taxon>
        <taxon>Campylobacterales</taxon>
        <taxon>Helicobacteraceae</taxon>
        <taxon>Helicobacter</taxon>
    </lineage>
</organism>
<name>LPXA_HELPJ</name>
<accession>Q9ZJL7</accession>
<sequence length="270" mass="29790">MSKIAKTAIISPKAEIGKGVEIGEFCVIGDGVKLDEGVKLHNNVTLQGHTFIGKNTEIFPFAVLGTQPQDLKYKGEYSELMVGEDNLIREFCMINPGTEGGIKKTLIGDKNLLMAYVHVAHDCVIGSHCILANGVTLAGHIEIGDYVNIGGLTAIHQFVRIAKGCMIAGKSALGKDVPPYCTVEGNRAFIRGLNRHRMRQLLESKDIDFIHALYKRLFRPIPSLRESAKLELEEHANNPFVKEICSFILESSRGVAYKSSEYSSEEKQEE</sequence>